<organism>
    <name type="scientific">Arabidopsis thaliana</name>
    <name type="common">Mouse-ear cress</name>
    <dbReference type="NCBI Taxonomy" id="3702"/>
    <lineage>
        <taxon>Eukaryota</taxon>
        <taxon>Viridiplantae</taxon>
        <taxon>Streptophyta</taxon>
        <taxon>Embryophyta</taxon>
        <taxon>Tracheophyta</taxon>
        <taxon>Spermatophyta</taxon>
        <taxon>Magnoliopsida</taxon>
        <taxon>eudicotyledons</taxon>
        <taxon>Gunneridae</taxon>
        <taxon>Pentapetalae</taxon>
        <taxon>rosids</taxon>
        <taxon>malvids</taxon>
        <taxon>Brassicales</taxon>
        <taxon>Brassicaceae</taxon>
        <taxon>Camelineae</taxon>
        <taxon>Arabidopsis</taxon>
    </lineage>
</organism>
<protein>
    <recommendedName>
        <fullName>Heparanase-like protein 3</fullName>
        <ecNumber>3.2.-.-</ecNumber>
    </recommendedName>
</protein>
<feature type="signal peptide" evidence="2">
    <location>
        <begin position="1"/>
        <end position="24"/>
    </location>
</feature>
<feature type="chain" id="PRO_0000042271" description="Heparanase-like protein 3">
    <location>
        <begin position="25"/>
        <end position="536"/>
    </location>
</feature>
<feature type="active site" description="Proton donor" evidence="2">
    <location>
        <position position="202"/>
    </location>
</feature>
<feature type="active site" description="Nucleophile" evidence="2">
    <location>
        <position position="319"/>
    </location>
</feature>
<feature type="glycosylation site" description="N-linked (GlcNAc...) asparagine" evidence="2">
    <location>
        <position position="30"/>
    </location>
</feature>
<feature type="glycosylation site" description="N-linked (GlcNAc...) asparagine" evidence="2">
    <location>
        <position position="122"/>
    </location>
</feature>
<feature type="glycosylation site" description="N-linked (GlcNAc...) asparagine" evidence="2">
    <location>
        <position position="176"/>
    </location>
</feature>
<feature type="glycosylation site" description="N-linked (GlcNAc...) asparagine" evidence="2">
    <location>
        <position position="191"/>
    </location>
</feature>
<feature type="glycosylation site" description="N-linked (GlcNAc...) asparagine" evidence="2">
    <location>
        <position position="265"/>
    </location>
</feature>
<feature type="glycosylation site" description="N-linked (GlcNAc...) asparagine" evidence="2">
    <location>
        <position position="308"/>
    </location>
</feature>
<feature type="glycosylation site" description="N-linked (GlcNAc...) asparagine" evidence="2">
    <location>
        <position position="370"/>
    </location>
</feature>
<feature type="glycosylation site" description="N-linked (GlcNAc...) asparagine" evidence="2">
    <location>
        <position position="427"/>
    </location>
</feature>
<feature type="glycosylation site" description="N-linked (GlcNAc...) asparagine" evidence="2">
    <location>
        <position position="438"/>
    </location>
</feature>
<feature type="glycosylation site" description="N-linked (GlcNAc...) asparagine" evidence="2">
    <location>
        <position position="510"/>
    </location>
</feature>
<feature type="splice variant" id="VSP_018141" description="In isoform 2." evidence="3">
    <original>S</original>
    <variation>R</variation>
    <location>
        <position position="382"/>
    </location>
</feature>
<feature type="splice variant" id="VSP_018142" description="In isoform 2." evidence="3">
    <location>
        <begin position="383"/>
        <end position="536"/>
    </location>
</feature>
<comment type="function">
    <text evidence="1">Endoglycosidase which is a cell surface and extracellular matrix-degrading enzyme. Cleaves heparan sulfate proteoglycans (HSPGs) into heparan sulfate side chains and core proteoglycans (By similarity).</text>
</comment>
<comment type="subcellular location">
    <subcellularLocation>
        <location evidence="1">Lysosome membrane</location>
        <topology evidence="1">Peripheral membrane protein</topology>
    </subcellularLocation>
    <subcellularLocation>
        <location evidence="1">Secreted</location>
    </subcellularLocation>
</comment>
<comment type="alternative products">
    <event type="alternative splicing"/>
    <isoform>
        <id>Q9FZP1-1</id>
        <name>1</name>
        <sequence type="displayed"/>
    </isoform>
    <isoform>
        <id>Q9FZP1-2</id>
        <name>2</name>
        <sequence type="described" ref="VSP_018141 VSP_018142"/>
    </isoform>
</comment>
<comment type="miscellaneous">
    <molecule>Isoform 2</molecule>
    <text evidence="3">May be due to an intron retention.</text>
</comment>
<comment type="similarity">
    <text evidence="3">Belongs to the glycosyl hydrolase 79 family.</text>
</comment>
<comment type="sequence caution" evidence="3">
    <conflict type="erroneous gene model prediction">
        <sequence resource="EMBL-CDS" id="AAC62790"/>
    </conflict>
</comment>
<comment type="sequence caution" evidence="3">
    <conflict type="erroneous gene model prediction">
        <sequence resource="EMBL-CDS" id="AAC62794"/>
    </conflict>
</comment>
<comment type="sequence caution" evidence="3">
    <conflict type="erroneous gene model prediction">
        <sequence resource="EMBL-CDS" id="BAB10787"/>
    </conflict>
</comment>
<accession>Q9FZP1</accession>
<accession>O82604</accession>
<accession>O82605</accession>
<accession>Q0WP10</accession>
<proteinExistence type="evidence at transcript level"/>
<gene>
    <name type="ordered locus">At5g34940</name>
    <name type="ORF">MGG23.2</name>
    <name type="ORF">T2L5.6</name>
    <name type="ORF">T2L5.7</name>
</gene>
<reference key="1">
    <citation type="journal article" date="2000" name="Nature">
        <title>Sequence and analysis of chromosome 5 of the plant Arabidopsis thaliana.</title>
        <authorList>
            <person name="Tabata S."/>
            <person name="Kaneko T."/>
            <person name="Nakamura Y."/>
            <person name="Kotani H."/>
            <person name="Kato T."/>
            <person name="Asamizu E."/>
            <person name="Miyajima N."/>
            <person name="Sasamoto S."/>
            <person name="Kimura T."/>
            <person name="Hosouchi T."/>
            <person name="Kawashima K."/>
            <person name="Kohara M."/>
            <person name="Matsumoto M."/>
            <person name="Matsuno A."/>
            <person name="Muraki A."/>
            <person name="Nakayama S."/>
            <person name="Nakazaki N."/>
            <person name="Naruo K."/>
            <person name="Okumura S."/>
            <person name="Shinpo S."/>
            <person name="Takeuchi C."/>
            <person name="Wada T."/>
            <person name="Watanabe A."/>
            <person name="Yamada M."/>
            <person name="Yasuda M."/>
            <person name="Sato S."/>
            <person name="de la Bastide M."/>
            <person name="Huang E."/>
            <person name="Spiegel L."/>
            <person name="Gnoj L."/>
            <person name="O'Shaughnessy A."/>
            <person name="Preston R."/>
            <person name="Habermann K."/>
            <person name="Murray J."/>
            <person name="Johnson D."/>
            <person name="Rohlfing T."/>
            <person name="Nelson J."/>
            <person name="Stoneking T."/>
            <person name="Pepin K."/>
            <person name="Spieth J."/>
            <person name="Sekhon M."/>
            <person name="Armstrong J."/>
            <person name="Becker M."/>
            <person name="Belter E."/>
            <person name="Cordum H."/>
            <person name="Cordes M."/>
            <person name="Courtney L."/>
            <person name="Courtney W."/>
            <person name="Dante M."/>
            <person name="Du H."/>
            <person name="Edwards J."/>
            <person name="Fryman J."/>
            <person name="Haakensen B."/>
            <person name="Lamar E."/>
            <person name="Latreille P."/>
            <person name="Leonard S."/>
            <person name="Meyer R."/>
            <person name="Mulvaney E."/>
            <person name="Ozersky P."/>
            <person name="Riley A."/>
            <person name="Strowmatt C."/>
            <person name="Wagner-McPherson C."/>
            <person name="Wollam A."/>
            <person name="Yoakum M."/>
            <person name="Bell M."/>
            <person name="Dedhia N."/>
            <person name="Parnell L."/>
            <person name="Shah R."/>
            <person name="Rodriguez M."/>
            <person name="Hoon See L."/>
            <person name="Vil D."/>
            <person name="Baker J."/>
            <person name="Kirchoff K."/>
            <person name="Toth K."/>
            <person name="King L."/>
            <person name="Bahret A."/>
            <person name="Miller B."/>
            <person name="Marra M.A."/>
            <person name="Martienssen R."/>
            <person name="McCombie W.R."/>
            <person name="Wilson R.K."/>
            <person name="Murphy G."/>
            <person name="Bancroft I."/>
            <person name="Volckaert G."/>
            <person name="Wambutt R."/>
            <person name="Duesterhoeft A."/>
            <person name="Stiekema W."/>
            <person name="Pohl T."/>
            <person name="Entian K.-D."/>
            <person name="Terryn N."/>
            <person name="Hartley N."/>
            <person name="Bent E."/>
            <person name="Johnson S."/>
            <person name="Langham S.-A."/>
            <person name="McCullagh B."/>
            <person name="Robben J."/>
            <person name="Grymonprez B."/>
            <person name="Zimmermann W."/>
            <person name="Ramsperger U."/>
            <person name="Wedler H."/>
            <person name="Balke K."/>
            <person name="Wedler E."/>
            <person name="Peters S."/>
            <person name="van Staveren M."/>
            <person name="Dirkse W."/>
            <person name="Mooijman P."/>
            <person name="Klein Lankhorst R."/>
            <person name="Weitzenegger T."/>
            <person name="Bothe G."/>
            <person name="Rose M."/>
            <person name="Hauf J."/>
            <person name="Berneiser S."/>
            <person name="Hempel S."/>
            <person name="Feldpausch M."/>
            <person name="Lamberth S."/>
            <person name="Villarroel R."/>
            <person name="Gielen J."/>
            <person name="Ardiles W."/>
            <person name="Bents O."/>
            <person name="Lemcke K."/>
            <person name="Kolesov G."/>
            <person name="Mayer K.F.X."/>
            <person name="Rudd S."/>
            <person name="Schoof H."/>
            <person name="Schueller C."/>
            <person name="Zaccaria P."/>
            <person name="Mewes H.-W."/>
            <person name="Bevan M."/>
            <person name="Fransz P.F."/>
        </authorList>
    </citation>
    <scope>NUCLEOTIDE SEQUENCE [LARGE SCALE GENOMIC DNA]</scope>
    <source>
        <strain>cv. Columbia</strain>
    </source>
</reference>
<reference key="2">
    <citation type="submission" date="1999-06" db="EMBL/GenBank/DDBJ databases">
        <title>Structural analysis of Arabidopsis thaliana chromosome 5. XI.</title>
        <authorList>
            <person name="Kaneko T."/>
            <person name="Katoh T."/>
            <person name="Asamizu E."/>
            <person name="Sato S."/>
            <person name="Nakamura Y."/>
            <person name="Kotani H."/>
            <person name="Tabata S."/>
        </authorList>
    </citation>
    <scope>NUCLEOTIDE SEQUENCE [LARGE SCALE GENOMIC DNA]</scope>
    <source>
        <strain>cv. Columbia</strain>
    </source>
</reference>
<reference key="3">
    <citation type="journal article" date="2017" name="Plant J.">
        <title>Araport11: a complete reannotation of the Arabidopsis thaliana reference genome.</title>
        <authorList>
            <person name="Cheng C.Y."/>
            <person name="Krishnakumar V."/>
            <person name="Chan A.P."/>
            <person name="Thibaud-Nissen F."/>
            <person name="Schobel S."/>
            <person name="Town C.D."/>
        </authorList>
    </citation>
    <scope>GENOME REANNOTATION</scope>
    <source>
        <strain>cv. Columbia</strain>
    </source>
</reference>
<reference key="4">
    <citation type="submission" date="2006-07" db="EMBL/GenBank/DDBJ databases">
        <title>Large-scale analysis of RIKEN Arabidopsis full-length (RAFL) cDNAs.</title>
        <authorList>
            <person name="Totoki Y."/>
            <person name="Seki M."/>
            <person name="Ishida J."/>
            <person name="Nakajima M."/>
            <person name="Enju A."/>
            <person name="Kamiya A."/>
            <person name="Narusaka M."/>
            <person name="Shin-i T."/>
            <person name="Nakagawa M."/>
            <person name="Sakamoto N."/>
            <person name="Oishi K."/>
            <person name="Kohara Y."/>
            <person name="Kobayashi M."/>
            <person name="Toyoda A."/>
            <person name="Sakaki Y."/>
            <person name="Sakurai T."/>
            <person name="Iida K."/>
            <person name="Akiyama K."/>
            <person name="Satou M."/>
            <person name="Toyoda T."/>
            <person name="Konagaya A."/>
            <person name="Carninci P."/>
            <person name="Kawai J."/>
            <person name="Hayashizaki Y."/>
            <person name="Shinozaki K."/>
        </authorList>
    </citation>
    <scope>NUCLEOTIDE SEQUENCE [LARGE SCALE MRNA]</scope>
    <source>
        <strain>cv. Columbia</strain>
    </source>
</reference>
<keyword id="KW-0025">Alternative splicing</keyword>
<keyword id="KW-0325">Glycoprotein</keyword>
<keyword id="KW-0378">Hydrolase</keyword>
<keyword id="KW-0458">Lysosome</keyword>
<keyword id="KW-0472">Membrane</keyword>
<keyword id="KW-1185">Reference proteome</keyword>
<keyword id="KW-0964">Secreted</keyword>
<keyword id="KW-0732">Signal</keyword>
<name>HPSE3_ARATH</name>
<sequence length="536" mass="59709">MAYRQILAIVLFLCVFQFLDCTVSSAVEENGTVFVYGRAAVGTIDEDFICATLDWWPPEKCDYGSCSWDHASILNLDLNNVILQNAIKAFAPLKIRIGGTLQDIVIYETPDSKQPCLPFTKNSSILFGYTQGCLPMRRWDELNAFFRKTGTKVIFGLNALSGRSIKSNGEAIGAWNYTNAESFIRFTAENNYTIDGWELGNELCGSGVGARVGANQYAIDTINLRNIVNRVYKNVSPMPLVIGPGGFFEVDWFTEYLNKAENSLNATTRHIYDLGPGVDEHLIEKILNPSYLDQEAKSFRSLKNIIKNSSTKAVAWVGESGGAYNSGRNLVSNAFVYSFWYLDQLGMASLYDTKTYCRQSLIGGNYGLLNTTNFTPNPDYYSALIWRQLMGRKALFTTFSGTKKIRSYTHCARQSKGITVLLMNLDNTTTVVAKVELNNSFSLRHTKHMKSYKRASSQLFGGPNGVIQREEYHLTAKDGNLHSQTMLLNGNALQVNSMGDLPPIEPIHINSTEPITIAPYSIVFVHMRNVVVPACA</sequence>
<evidence type="ECO:0000250" key="1"/>
<evidence type="ECO:0000255" key="2"/>
<evidence type="ECO:0000305" key="3"/>
<dbReference type="EC" id="3.2.-.-"/>
<dbReference type="EMBL" id="AF096371">
    <property type="protein sequence ID" value="AAC62790.1"/>
    <property type="status" value="ALT_SEQ"/>
    <property type="molecule type" value="Genomic_DNA"/>
</dbReference>
<dbReference type="EMBL" id="AF096371">
    <property type="protein sequence ID" value="AAC62794.1"/>
    <property type="status" value="ALT_SEQ"/>
    <property type="molecule type" value="Genomic_DNA"/>
</dbReference>
<dbReference type="EMBL" id="AB028613">
    <property type="protein sequence ID" value="BAB10787.1"/>
    <property type="status" value="ALT_SEQ"/>
    <property type="molecule type" value="Genomic_DNA"/>
</dbReference>
<dbReference type="EMBL" id="CP002688">
    <property type="protein sequence ID" value="AED93923.1"/>
    <property type="molecule type" value="Genomic_DNA"/>
</dbReference>
<dbReference type="EMBL" id="AK229275">
    <property type="protein sequence ID" value="BAF01139.1"/>
    <property type="molecule type" value="mRNA"/>
</dbReference>
<dbReference type="PIR" id="T01953">
    <property type="entry name" value="T01953"/>
</dbReference>
<dbReference type="PIR" id="T01954">
    <property type="entry name" value="T01954"/>
</dbReference>
<dbReference type="RefSeq" id="NP_851093.1">
    <molecule id="Q9FZP1-1"/>
    <property type="nucleotide sequence ID" value="NM_180762.3"/>
</dbReference>
<dbReference type="SMR" id="Q9FZP1"/>
<dbReference type="BioGRID" id="18694">
    <property type="interactions" value="1"/>
</dbReference>
<dbReference type="FunCoup" id="Q9FZP1">
    <property type="interactions" value="99"/>
</dbReference>
<dbReference type="STRING" id="3702.Q9FZP1"/>
<dbReference type="CAZy" id="GH79">
    <property type="family name" value="Glycoside Hydrolase Family 79"/>
</dbReference>
<dbReference type="GlyGen" id="Q9FZP1">
    <property type="glycosylation" value="10 sites"/>
</dbReference>
<dbReference type="iPTMnet" id="Q9FZP1"/>
<dbReference type="PaxDb" id="3702-AT5G34940.2"/>
<dbReference type="ProteomicsDB" id="232174">
    <molecule id="Q9FZP1-1"/>
</dbReference>
<dbReference type="EnsemblPlants" id="AT5G34940.2">
    <molecule id="Q9FZP1-1"/>
    <property type="protein sequence ID" value="AT5G34940.2"/>
    <property type="gene ID" value="AT5G34940"/>
</dbReference>
<dbReference type="GeneID" id="833437"/>
<dbReference type="Gramene" id="AT5G34940.2">
    <molecule id="Q9FZP1-1"/>
    <property type="protein sequence ID" value="AT5G34940.2"/>
    <property type="gene ID" value="AT5G34940"/>
</dbReference>
<dbReference type="KEGG" id="ath:AT5G34940"/>
<dbReference type="Araport" id="AT5G34940"/>
<dbReference type="TAIR" id="AT5G34940">
    <property type="gene designation" value="GUS3"/>
</dbReference>
<dbReference type="eggNOG" id="ENOG502QQST">
    <property type="taxonomic scope" value="Eukaryota"/>
</dbReference>
<dbReference type="InParanoid" id="Q9FZP1"/>
<dbReference type="OMA" id="RMYLHCT"/>
<dbReference type="PhylomeDB" id="Q9FZP1"/>
<dbReference type="BioCyc" id="ARA:AT5G34940-MONOMER"/>
<dbReference type="PRO" id="PR:Q9FZP1"/>
<dbReference type="Proteomes" id="UP000006548">
    <property type="component" value="Chromosome 5"/>
</dbReference>
<dbReference type="ExpressionAtlas" id="Q9FZP1">
    <property type="expression patterns" value="baseline and differential"/>
</dbReference>
<dbReference type="GO" id="GO:0005576">
    <property type="term" value="C:extracellular region"/>
    <property type="evidence" value="ECO:0007669"/>
    <property type="project" value="UniProtKB-SubCell"/>
</dbReference>
<dbReference type="GO" id="GO:0005765">
    <property type="term" value="C:lysosomal membrane"/>
    <property type="evidence" value="ECO:0007669"/>
    <property type="project" value="UniProtKB-SubCell"/>
</dbReference>
<dbReference type="GO" id="GO:0004566">
    <property type="term" value="F:beta-glucuronidase activity"/>
    <property type="evidence" value="ECO:0000250"/>
    <property type="project" value="TAIR"/>
</dbReference>
<dbReference type="FunFam" id="3.20.20.80:FF:000023">
    <property type="entry name" value="heparanase-like protein 3"/>
    <property type="match status" value="1"/>
</dbReference>
<dbReference type="Gene3D" id="3.20.20.80">
    <property type="entry name" value="Glycosidases"/>
    <property type="match status" value="1"/>
</dbReference>
<dbReference type="InterPro" id="IPR005199">
    <property type="entry name" value="Glyco_hydro_79"/>
</dbReference>
<dbReference type="InterPro" id="IPR017853">
    <property type="entry name" value="Glycoside_hydrolase_SF"/>
</dbReference>
<dbReference type="PANTHER" id="PTHR14363:SF17">
    <property type="entry name" value="HEPARANASE-LIKE PROTEIN 3"/>
    <property type="match status" value="1"/>
</dbReference>
<dbReference type="PANTHER" id="PTHR14363">
    <property type="entry name" value="HEPARANASE-RELATED"/>
    <property type="match status" value="1"/>
</dbReference>
<dbReference type="Pfam" id="PF03662">
    <property type="entry name" value="Glyco_hydro_79n"/>
    <property type="match status" value="1"/>
</dbReference>
<dbReference type="SUPFAM" id="SSF51445">
    <property type="entry name" value="(Trans)glycosidases"/>
    <property type="match status" value="1"/>
</dbReference>